<feature type="chain" id="PRO_1000193324" description="Protein RecA">
    <location>
        <begin position="1"/>
        <end position="348"/>
    </location>
</feature>
<feature type="binding site" evidence="1">
    <location>
        <begin position="68"/>
        <end position="75"/>
    </location>
    <ligand>
        <name>ATP</name>
        <dbReference type="ChEBI" id="CHEBI:30616"/>
    </ligand>
</feature>
<reference key="1">
    <citation type="submission" date="2009-03" db="EMBL/GenBank/DDBJ databases">
        <title>Comparison of the complete genome sequences of Rhodococcus erythropolis PR4 and Rhodococcus opacus B4.</title>
        <authorList>
            <person name="Takarada H."/>
            <person name="Sekine M."/>
            <person name="Hosoyama A."/>
            <person name="Yamada R."/>
            <person name="Fujisawa T."/>
            <person name="Omata S."/>
            <person name="Shimizu A."/>
            <person name="Tsukatani N."/>
            <person name="Tanikawa S."/>
            <person name="Fujita N."/>
            <person name="Harayama S."/>
        </authorList>
    </citation>
    <scope>NUCLEOTIDE SEQUENCE [LARGE SCALE GENOMIC DNA]</scope>
    <source>
        <strain>B4</strain>
    </source>
</reference>
<proteinExistence type="inferred from homology"/>
<name>RECA_RHOOB</name>
<keyword id="KW-0067">ATP-binding</keyword>
<keyword id="KW-0963">Cytoplasm</keyword>
<keyword id="KW-0227">DNA damage</keyword>
<keyword id="KW-0233">DNA recombination</keyword>
<keyword id="KW-0234">DNA repair</keyword>
<keyword id="KW-0238">DNA-binding</keyword>
<keyword id="KW-0547">Nucleotide-binding</keyword>
<keyword id="KW-0742">SOS response</keyword>
<dbReference type="EMBL" id="AP011115">
    <property type="protein sequence ID" value="BAH54998.1"/>
    <property type="molecule type" value="Genomic_DNA"/>
</dbReference>
<dbReference type="RefSeq" id="WP_015890434.1">
    <property type="nucleotide sequence ID" value="NC_012522.1"/>
</dbReference>
<dbReference type="SMR" id="C1B381"/>
<dbReference type="STRING" id="632772.ROP_67510"/>
<dbReference type="KEGG" id="rop:ROP_67510"/>
<dbReference type="PATRIC" id="fig|632772.20.peg.7038"/>
<dbReference type="HOGENOM" id="CLU_040469_3_2_11"/>
<dbReference type="OrthoDB" id="9776733at2"/>
<dbReference type="Proteomes" id="UP000002212">
    <property type="component" value="Chromosome"/>
</dbReference>
<dbReference type="GO" id="GO:0005829">
    <property type="term" value="C:cytosol"/>
    <property type="evidence" value="ECO:0007669"/>
    <property type="project" value="TreeGrafter"/>
</dbReference>
<dbReference type="GO" id="GO:0005524">
    <property type="term" value="F:ATP binding"/>
    <property type="evidence" value="ECO:0007669"/>
    <property type="project" value="UniProtKB-UniRule"/>
</dbReference>
<dbReference type="GO" id="GO:0016887">
    <property type="term" value="F:ATP hydrolysis activity"/>
    <property type="evidence" value="ECO:0007669"/>
    <property type="project" value="InterPro"/>
</dbReference>
<dbReference type="GO" id="GO:0140664">
    <property type="term" value="F:ATP-dependent DNA damage sensor activity"/>
    <property type="evidence" value="ECO:0007669"/>
    <property type="project" value="InterPro"/>
</dbReference>
<dbReference type="GO" id="GO:0003684">
    <property type="term" value="F:damaged DNA binding"/>
    <property type="evidence" value="ECO:0007669"/>
    <property type="project" value="UniProtKB-UniRule"/>
</dbReference>
<dbReference type="GO" id="GO:0003697">
    <property type="term" value="F:single-stranded DNA binding"/>
    <property type="evidence" value="ECO:0007669"/>
    <property type="project" value="UniProtKB-UniRule"/>
</dbReference>
<dbReference type="GO" id="GO:0006310">
    <property type="term" value="P:DNA recombination"/>
    <property type="evidence" value="ECO:0007669"/>
    <property type="project" value="UniProtKB-UniRule"/>
</dbReference>
<dbReference type="GO" id="GO:0006281">
    <property type="term" value="P:DNA repair"/>
    <property type="evidence" value="ECO:0007669"/>
    <property type="project" value="UniProtKB-UniRule"/>
</dbReference>
<dbReference type="GO" id="GO:0009432">
    <property type="term" value="P:SOS response"/>
    <property type="evidence" value="ECO:0007669"/>
    <property type="project" value="UniProtKB-UniRule"/>
</dbReference>
<dbReference type="CDD" id="cd00983">
    <property type="entry name" value="RecA"/>
    <property type="match status" value="1"/>
</dbReference>
<dbReference type="FunFam" id="3.40.50.300:FF:002436">
    <property type="entry name" value="Protein RecA"/>
    <property type="match status" value="1"/>
</dbReference>
<dbReference type="Gene3D" id="3.40.50.300">
    <property type="entry name" value="P-loop containing nucleotide triphosphate hydrolases"/>
    <property type="match status" value="1"/>
</dbReference>
<dbReference type="HAMAP" id="MF_00268">
    <property type="entry name" value="RecA"/>
    <property type="match status" value="1"/>
</dbReference>
<dbReference type="InterPro" id="IPR003593">
    <property type="entry name" value="AAA+_ATPase"/>
</dbReference>
<dbReference type="InterPro" id="IPR013765">
    <property type="entry name" value="DNA_recomb/repair_RecA"/>
</dbReference>
<dbReference type="InterPro" id="IPR020584">
    <property type="entry name" value="DNA_recomb/repair_RecA_CS"/>
</dbReference>
<dbReference type="InterPro" id="IPR027417">
    <property type="entry name" value="P-loop_NTPase"/>
</dbReference>
<dbReference type="InterPro" id="IPR049261">
    <property type="entry name" value="RecA-like_C"/>
</dbReference>
<dbReference type="InterPro" id="IPR049428">
    <property type="entry name" value="RecA-like_N"/>
</dbReference>
<dbReference type="InterPro" id="IPR020588">
    <property type="entry name" value="RecA_ATP-bd"/>
</dbReference>
<dbReference type="InterPro" id="IPR023400">
    <property type="entry name" value="RecA_C_sf"/>
</dbReference>
<dbReference type="InterPro" id="IPR020587">
    <property type="entry name" value="RecA_monomer-monomer_interface"/>
</dbReference>
<dbReference type="NCBIfam" id="TIGR02012">
    <property type="entry name" value="tigrfam_recA"/>
    <property type="match status" value="1"/>
</dbReference>
<dbReference type="PANTHER" id="PTHR45900:SF1">
    <property type="entry name" value="MITOCHONDRIAL DNA REPAIR PROTEIN RECA HOMOLOG-RELATED"/>
    <property type="match status" value="1"/>
</dbReference>
<dbReference type="PANTHER" id="PTHR45900">
    <property type="entry name" value="RECA"/>
    <property type="match status" value="1"/>
</dbReference>
<dbReference type="Pfam" id="PF00154">
    <property type="entry name" value="RecA"/>
    <property type="match status" value="1"/>
</dbReference>
<dbReference type="Pfam" id="PF21096">
    <property type="entry name" value="RecA_C"/>
    <property type="match status" value="1"/>
</dbReference>
<dbReference type="PRINTS" id="PR00142">
    <property type="entry name" value="RECA"/>
</dbReference>
<dbReference type="SMART" id="SM00382">
    <property type="entry name" value="AAA"/>
    <property type="match status" value="1"/>
</dbReference>
<dbReference type="SUPFAM" id="SSF52540">
    <property type="entry name" value="P-loop containing nucleoside triphosphate hydrolases"/>
    <property type="match status" value="1"/>
</dbReference>
<dbReference type="SUPFAM" id="SSF54752">
    <property type="entry name" value="RecA protein, C-terminal domain"/>
    <property type="match status" value="1"/>
</dbReference>
<dbReference type="PROSITE" id="PS00321">
    <property type="entry name" value="RECA_1"/>
    <property type="match status" value="1"/>
</dbReference>
<dbReference type="PROSITE" id="PS50162">
    <property type="entry name" value="RECA_2"/>
    <property type="match status" value="1"/>
</dbReference>
<dbReference type="PROSITE" id="PS50163">
    <property type="entry name" value="RECA_3"/>
    <property type="match status" value="1"/>
</dbReference>
<organism>
    <name type="scientific">Rhodococcus opacus (strain B4)</name>
    <dbReference type="NCBI Taxonomy" id="632772"/>
    <lineage>
        <taxon>Bacteria</taxon>
        <taxon>Bacillati</taxon>
        <taxon>Actinomycetota</taxon>
        <taxon>Actinomycetes</taxon>
        <taxon>Mycobacteriales</taxon>
        <taxon>Nocardiaceae</taxon>
        <taxon>Rhodococcus</taxon>
    </lineage>
</organism>
<protein>
    <recommendedName>
        <fullName evidence="1">Protein RecA</fullName>
    </recommendedName>
    <alternativeName>
        <fullName evidence="1">Recombinase A</fullName>
    </alternativeName>
</protein>
<sequence length="348" mass="37013">MAPQAHDRDKALDLALAQIDKNFGKGSVMRLGEGVRQPIAVIPTGSISLDVALGIGGLPRGRVVEIYGPESSGKTTVALHAVANAQAAGGIAAFIDAEHALDPDYAQKLGVDTDALLVSQPDTGEQALEIADMLIRSGALDILVVDSVAALVPRAEIEGEMGDSHVGLQARLMSQALRKMTGALSNSGTTAIFINQLREKIGVMFGSPETTTGGKALKFYSSVRLDVRRIETLKDGTDAVGNRTRVKVVKNKVAPPFKQAEFDILYGQGISKEGSLIDMGVEHGFIRKSGSWYTYEGDQLGQGKENARKFLLENTDIRDEIEKKIKEKLGIGADVTAAATDDAAPVEF</sequence>
<accession>C1B381</accession>
<comment type="function">
    <text evidence="1">Can catalyze the hydrolysis of ATP in the presence of single-stranded DNA, the ATP-dependent uptake of single-stranded DNA by duplex DNA, and the ATP-dependent hybridization of homologous single-stranded DNAs. It interacts with LexA causing its activation and leading to its autocatalytic cleavage.</text>
</comment>
<comment type="subcellular location">
    <subcellularLocation>
        <location evidence="1">Cytoplasm</location>
    </subcellularLocation>
</comment>
<comment type="similarity">
    <text evidence="1">Belongs to the RecA family.</text>
</comment>
<evidence type="ECO:0000255" key="1">
    <source>
        <dbReference type="HAMAP-Rule" id="MF_00268"/>
    </source>
</evidence>
<gene>
    <name evidence="1" type="primary">recA</name>
    <name type="ordered locus">ROP_67510</name>
</gene>